<organism>
    <name type="scientific">Rhodopirellula baltica (strain DSM 10527 / NCIMB 13988 / SH1)</name>
    <dbReference type="NCBI Taxonomy" id="243090"/>
    <lineage>
        <taxon>Bacteria</taxon>
        <taxon>Pseudomonadati</taxon>
        <taxon>Planctomycetota</taxon>
        <taxon>Planctomycetia</taxon>
        <taxon>Pirellulales</taxon>
        <taxon>Pirellulaceae</taxon>
        <taxon>Rhodopirellula</taxon>
    </lineage>
</organism>
<protein>
    <recommendedName>
        <fullName evidence="1">Pyridoxine/pyridoxamine 5'-phosphate oxidase</fullName>
        <ecNumber evidence="1">1.4.3.5</ecNumber>
    </recommendedName>
    <alternativeName>
        <fullName evidence="1">PNP/PMP oxidase</fullName>
        <shortName evidence="1">PNPOx</shortName>
    </alternativeName>
    <alternativeName>
        <fullName evidence="1">Pyridoxal 5'-phosphate synthase</fullName>
    </alternativeName>
</protein>
<gene>
    <name evidence="1" type="primary">pdxH</name>
    <name type="ordered locus">RB10006</name>
</gene>
<feature type="chain" id="PRO_0000167748" description="Pyridoxine/pyridoxamine 5'-phosphate oxidase">
    <location>
        <begin position="1"/>
        <end position="223"/>
    </location>
</feature>
<feature type="binding site" evidence="1">
    <location>
        <begin position="13"/>
        <end position="16"/>
    </location>
    <ligand>
        <name>substrate</name>
    </ligand>
</feature>
<feature type="binding site" evidence="1">
    <location>
        <begin position="68"/>
        <end position="73"/>
    </location>
    <ligand>
        <name>FMN</name>
        <dbReference type="ChEBI" id="CHEBI:58210"/>
    </ligand>
</feature>
<feature type="binding site" evidence="1">
    <location>
        <position position="73"/>
    </location>
    <ligand>
        <name>substrate</name>
    </ligand>
</feature>
<feature type="binding site" evidence="1">
    <location>
        <begin position="83"/>
        <end position="84"/>
    </location>
    <ligand>
        <name>FMN</name>
        <dbReference type="ChEBI" id="CHEBI:58210"/>
    </ligand>
</feature>
<feature type="binding site" evidence="1">
    <location>
        <position position="90"/>
    </location>
    <ligand>
        <name>FMN</name>
        <dbReference type="ChEBI" id="CHEBI:58210"/>
    </ligand>
</feature>
<feature type="binding site" evidence="1">
    <location>
        <position position="112"/>
    </location>
    <ligand>
        <name>FMN</name>
        <dbReference type="ChEBI" id="CHEBI:58210"/>
    </ligand>
</feature>
<feature type="binding site" evidence="1">
    <location>
        <position position="130"/>
    </location>
    <ligand>
        <name>substrate</name>
    </ligand>
</feature>
<feature type="binding site" evidence="1">
    <location>
        <position position="134"/>
    </location>
    <ligand>
        <name>substrate</name>
    </ligand>
</feature>
<feature type="binding site" evidence="1">
    <location>
        <position position="138"/>
    </location>
    <ligand>
        <name>substrate</name>
    </ligand>
</feature>
<feature type="binding site" evidence="1">
    <location>
        <begin position="147"/>
        <end position="148"/>
    </location>
    <ligand>
        <name>FMN</name>
        <dbReference type="ChEBI" id="CHEBI:58210"/>
    </ligand>
</feature>
<feature type="binding site" evidence="1">
    <location>
        <position position="193"/>
    </location>
    <ligand>
        <name>FMN</name>
        <dbReference type="ChEBI" id="CHEBI:58210"/>
    </ligand>
</feature>
<feature type="binding site" evidence="1">
    <location>
        <begin position="199"/>
        <end position="201"/>
    </location>
    <ligand>
        <name>substrate</name>
    </ligand>
</feature>
<feature type="binding site" evidence="1">
    <location>
        <position position="203"/>
    </location>
    <ligand>
        <name>FMN</name>
        <dbReference type="ChEBI" id="CHEBI:58210"/>
    </ligand>
</feature>
<name>PDXH_RHOBA</name>
<sequence>MSDFIPPAMDQMRKNYSLGGLHENDAKSDPLVQFQSWFEEALEDVPNWFEPNAMTLSTSDVSGDITSRIVLLKGVEEKKFLFYTNYDSTKGSQMRANPRVSLCLFWPHCQRQVRIQGTVDKVSREMSETYFHSRPRDSQLGAHVSQQSSVIDSREAMESSLAQLKARYPEGTQIPLPENWGGYAVTPMSFEFWQGRPSRLHDRLVYKRDDADSNDWVMQRLSP</sequence>
<keyword id="KW-0285">Flavoprotein</keyword>
<keyword id="KW-0288">FMN</keyword>
<keyword id="KW-0560">Oxidoreductase</keyword>
<keyword id="KW-0664">Pyridoxine biosynthesis</keyword>
<keyword id="KW-1185">Reference proteome</keyword>
<dbReference type="EC" id="1.4.3.5" evidence="1"/>
<dbReference type="EMBL" id="BX294150">
    <property type="protein sequence ID" value="CAD76573.1"/>
    <property type="molecule type" value="Genomic_DNA"/>
</dbReference>
<dbReference type="RefSeq" id="NP_869187.1">
    <property type="nucleotide sequence ID" value="NC_005027.1"/>
</dbReference>
<dbReference type="RefSeq" id="WP_011122568.1">
    <property type="nucleotide sequence ID" value="NC_005027.1"/>
</dbReference>
<dbReference type="SMR" id="Q7UKQ9"/>
<dbReference type="FunCoup" id="Q7UKQ9">
    <property type="interactions" value="440"/>
</dbReference>
<dbReference type="STRING" id="243090.RB10006"/>
<dbReference type="EnsemblBacteria" id="CAD76573">
    <property type="protein sequence ID" value="CAD76573"/>
    <property type="gene ID" value="RB10006"/>
</dbReference>
<dbReference type="KEGG" id="rba:RB10006"/>
<dbReference type="PATRIC" id="fig|243090.15.peg.4819"/>
<dbReference type="eggNOG" id="COG0259">
    <property type="taxonomic scope" value="Bacteria"/>
</dbReference>
<dbReference type="HOGENOM" id="CLU_032263_2_2_0"/>
<dbReference type="InParanoid" id="Q7UKQ9"/>
<dbReference type="OrthoDB" id="9780392at2"/>
<dbReference type="UniPathway" id="UPA01068">
    <property type="reaction ID" value="UER00304"/>
</dbReference>
<dbReference type="UniPathway" id="UPA01068">
    <property type="reaction ID" value="UER00305"/>
</dbReference>
<dbReference type="Proteomes" id="UP000001025">
    <property type="component" value="Chromosome"/>
</dbReference>
<dbReference type="GO" id="GO:0010181">
    <property type="term" value="F:FMN binding"/>
    <property type="evidence" value="ECO:0007669"/>
    <property type="project" value="UniProtKB-UniRule"/>
</dbReference>
<dbReference type="GO" id="GO:0004733">
    <property type="term" value="F:pyridoxamine phosphate oxidase activity"/>
    <property type="evidence" value="ECO:0007669"/>
    <property type="project" value="UniProtKB-UniRule"/>
</dbReference>
<dbReference type="GO" id="GO:0008615">
    <property type="term" value="P:pyridoxine biosynthetic process"/>
    <property type="evidence" value="ECO:0007669"/>
    <property type="project" value="UniProtKB-KW"/>
</dbReference>
<dbReference type="FunFam" id="2.30.110.10:FF:000020">
    <property type="entry name" value="PNPO isoform 11"/>
    <property type="match status" value="1"/>
</dbReference>
<dbReference type="Gene3D" id="2.30.110.10">
    <property type="entry name" value="Electron Transport, Fmn-binding Protein, Chain A"/>
    <property type="match status" value="1"/>
</dbReference>
<dbReference type="HAMAP" id="MF_01629">
    <property type="entry name" value="PdxH"/>
    <property type="match status" value="1"/>
</dbReference>
<dbReference type="InterPro" id="IPR000659">
    <property type="entry name" value="Pyridox_Oxase"/>
</dbReference>
<dbReference type="InterPro" id="IPR019740">
    <property type="entry name" value="Pyridox_Oxase_CS"/>
</dbReference>
<dbReference type="InterPro" id="IPR011576">
    <property type="entry name" value="Pyridox_Oxase_N"/>
</dbReference>
<dbReference type="InterPro" id="IPR019576">
    <property type="entry name" value="Pyridoxamine_oxidase_dimer_C"/>
</dbReference>
<dbReference type="InterPro" id="IPR012349">
    <property type="entry name" value="Split_barrel_FMN-bd"/>
</dbReference>
<dbReference type="NCBIfam" id="TIGR00558">
    <property type="entry name" value="pdxH"/>
    <property type="match status" value="1"/>
</dbReference>
<dbReference type="NCBIfam" id="NF004231">
    <property type="entry name" value="PRK05679.1"/>
    <property type="match status" value="1"/>
</dbReference>
<dbReference type="PANTHER" id="PTHR10851:SF0">
    <property type="entry name" value="PYRIDOXINE-5'-PHOSPHATE OXIDASE"/>
    <property type="match status" value="1"/>
</dbReference>
<dbReference type="PANTHER" id="PTHR10851">
    <property type="entry name" value="PYRIDOXINE-5-PHOSPHATE OXIDASE"/>
    <property type="match status" value="1"/>
</dbReference>
<dbReference type="Pfam" id="PF10590">
    <property type="entry name" value="PNP_phzG_C"/>
    <property type="match status" value="1"/>
</dbReference>
<dbReference type="Pfam" id="PF01243">
    <property type="entry name" value="PNPOx_N"/>
    <property type="match status" value="1"/>
</dbReference>
<dbReference type="PIRSF" id="PIRSF000190">
    <property type="entry name" value="Pyd_amn-ph_oxd"/>
    <property type="match status" value="1"/>
</dbReference>
<dbReference type="SUPFAM" id="SSF50475">
    <property type="entry name" value="FMN-binding split barrel"/>
    <property type="match status" value="1"/>
</dbReference>
<dbReference type="PROSITE" id="PS01064">
    <property type="entry name" value="PYRIDOX_OXIDASE"/>
    <property type="match status" value="1"/>
</dbReference>
<accession>Q7UKQ9</accession>
<evidence type="ECO:0000255" key="1">
    <source>
        <dbReference type="HAMAP-Rule" id="MF_01629"/>
    </source>
</evidence>
<reference key="1">
    <citation type="journal article" date="2003" name="Proc. Natl. Acad. Sci. U.S.A.">
        <title>Complete genome sequence of the marine planctomycete Pirellula sp. strain 1.</title>
        <authorList>
            <person name="Gloeckner F.O."/>
            <person name="Kube M."/>
            <person name="Bauer M."/>
            <person name="Teeling H."/>
            <person name="Lombardot T."/>
            <person name="Ludwig W."/>
            <person name="Gade D."/>
            <person name="Beck A."/>
            <person name="Borzym K."/>
            <person name="Heitmann K."/>
            <person name="Rabus R."/>
            <person name="Schlesner H."/>
            <person name="Amann R."/>
            <person name="Reinhardt R."/>
        </authorList>
    </citation>
    <scope>NUCLEOTIDE SEQUENCE [LARGE SCALE GENOMIC DNA]</scope>
    <source>
        <strain>DSM 10527 / NCIMB 13988 / SH1</strain>
    </source>
</reference>
<comment type="function">
    <text evidence="1">Catalyzes the oxidation of either pyridoxine 5'-phosphate (PNP) or pyridoxamine 5'-phosphate (PMP) into pyridoxal 5'-phosphate (PLP).</text>
</comment>
<comment type="catalytic activity">
    <reaction evidence="1">
        <text>pyridoxamine 5'-phosphate + O2 + H2O = pyridoxal 5'-phosphate + H2O2 + NH4(+)</text>
        <dbReference type="Rhea" id="RHEA:15817"/>
        <dbReference type="ChEBI" id="CHEBI:15377"/>
        <dbReference type="ChEBI" id="CHEBI:15379"/>
        <dbReference type="ChEBI" id="CHEBI:16240"/>
        <dbReference type="ChEBI" id="CHEBI:28938"/>
        <dbReference type="ChEBI" id="CHEBI:58451"/>
        <dbReference type="ChEBI" id="CHEBI:597326"/>
        <dbReference type="EC" id="1.4.3.5"/>
    </reaction>
</comment>
<comment type="catalytic activity">
    <reaction evidence="1">
        <text>pyridoxine 5'-phosphate + O2 = pyridoxal 5'-phosphate + H2O2</text>
        <dbReference type="Rhea" id="RHEA:15149"/>
        <dbReference type="ChEBI" id="CHEBI:15379"/>
        <dbReference type="ChEBI" id="CHEBI:16240"/>
        <dbReference type="ChEBI" id="CHEBI:58589"/>
        <dbReference type="ChEBI" id="CHEBI:597326"/>
        <dbReference type="EC" id="1.4.3.5"/>
    </reaction>
</comment>
<comment type="cofactor">
    <cofactor evidence="1">
        <name>FMN</name>
        <dbReference type="ChEBI" id="CHEBI:58210"/>
    </cofactor>
    <text evidence="1">Binds 1 FMN per subunit.</text>
</comment>
<comment type="pathway">
    <text evidence="1">Cofactor metabolism; pyridoxal 5'-phosphate salvage; pyridoxal 5'-phosphate from pyridoxamine 5'-phosphate: step 1/1.</text>
</comment>
<comment type="pathway">
    <text evidence="1">Cofactor metabolism; pyridoxal 5'-phosphate salvage; pyridoxal 5'-phosphate from pyridoxine 5'-phosphate: step 1/1.</text>
</comment>
<comment type="subunit">
    <text evidence="1">Homodimer.</text>
</comment>
<comment type="similarity">
    <text evidence="1">Belongs to the pyridoxamine 5'-phosphate oxidase family.</text>
</comment>
<proteinExistence type="inferred from homology"/>